<keyword id="KW-0028">Amino-acid biosynthesis</keyword>
<keyword id="KW-0057">Aromatic amino acid biosynthesis</keyword>
<keyword id="KW-0170">Cobalt</keyword>
<keyword id="KW-0963">Cytoplasm</keyword>
<keyword id="KW-0456">Lyase</keyword>
<keyword id="KW-0479">Metal-binding</keyword>
<keyword id="KW-0520">NAD</keyword>
<keyword id="KW-0547">Nucleotide-binding</keyword>
<keyword id="KW-1185">Reference proteome</keyword>
<keyword id="KW-0862">Zinc</keyword>
<proteinExistence type="inferred from homology"/>
<feature type="chain" id="PRO_0000140789" description="3-dehydroquinate synthase">
    <location>
        <begin position="1"/>
        <end position="363"/>
    </location>
</feature>
<feature type="binding site" evidence="1">
    <location>
        <begin position="109"/>
        <end position="113"/>
    </location>
    <ligand>
        <name>NAD(+)</name>
        <dbReference type="ChEBI" id="CHEBI:57540"/>
    </ligand>
</feature>
<feature type="binding site" evidence="1">
    <location>
        <begin position="133"/>
        <end position="134"/>
    </location>
    <ligand>
        <name>NAD(+)</name>
        <dbReference type="ChEBI" id="CHEBI:57540"/>
    </ligand>
</feature>
<feature type="binding site" evidence="1">
    <location>
        <position position="146"/>
    </location>
    <ligand>
        <name>NAD(+)</name>
        <dbReference type="ChEBI" id="CHEBI:57540"/>
    </ligand>
</feature>
<feature type="binding site" evidence="1">
    <location>
        <position position="155"/>
    </location>
    <ligand>
        <name>NAD(+)</name>
        <dbReference type="ChEBI" id="CHEBI:57540"/>
    </ligand>
</feature>
<feature type="binding site" evidence="1">
    <location>
        <position position="188"/>
    </location>
    <ligand>
        <name>Zn(2+)</name>
        <dbReference type="ChEBI" id="CHEBI:29105"/>
    </ligand>
</feature>
<feature type="binding site" evidence="1">
    <location>
        <position position="251"/>
    </location>
    <ligand>
        <name>Zn(2+)</name>
        <dbReference type="ChEBI" id="CHEBI:29105"/>
    </ligand>
</feature>
<feature type="binding site" evidence="1">
    <location>
        <position position="267"/>
    </location>
    <ligand>
        <name>Zn(2+)</name>
        <dbReference type="ChEBI" id="CHEBI:29105"/>
    </ligand>
</feature>
<reference key="1">
    <citation type="journal article" date="2001" name="Proc. Natl. Acad. Sci. U.S.A.">
        <title>Genome sequence of an industrial microorganism Streptomyces avermitilis: deducing the ability of producing secondary metabolites.</title>
        <authorList>
            <person name="Omura S."/>
            <person name="Ikeda H."/>
            <person name="Ishikawa J."/>
            <person name="Hanamoto A."/>
            <person name="Takahashi C."/>
            <person name="Shinose M."/>
            <person name="Takahashi Y."/>
            <person name="Horikawa H."/>
            <person name="Nakazawa H."/>
            <person name="Osonoe T."/>
            <person name="Kikuchi H."/>
            <person name="Shiba T."/>
            <person name="Sakaki Y."/>
            <person name="Hattori M."/>
        </authorList>
    </citation>
    <scope>NUCLEOTIDE SEQUENCE [LARGE SCALE GENOMIC DNA]</scope>
    <source>
        <strain>ATCC 31267 / DSM 46492 / JCM 5070 / NBRC 14893 / NCIMB 12804 / NRRL 8165 / MA-4680</strain>
    </source>
</reference>
<reference key="2">
    <citation type="journal article" date="2003" name="Nat. Biotechnol.">
        <title>Complete genome sequence and comparative analysis of the industrial microorganism Streptomyces avermitilis.</title>
        <authorList>
            <person name="Ikeda H."/>
            <person name="Ishikawa J."/>
            <person name="Hanamoto A."/>
            <person name="Shinose M."/>
            <person name="Kikuchi H."/>
            <person name="Shiba T."/>
            <person name="Sakaki Y."/>
            <person name="Hattori M."/>
            <person name="Omura S."/>
        </authorList>
    </citation>
    <scope>NUCLEOTIDE SEQUENCE [LARGE SCALE GENOMIC DNA]</scope>
    <source>
        <strain>ATCC 31267 / DSM 46492 / JCM 5070 / NBRC 14893 / NCIMB 12804 / NRRL 8165 / MA-4680</strain>
    </source>
</reference>
<accession>Q827R8</accession>
<comment type="function">
    <text evidence="1">Catalyzes the conversion of 3-deoxy-D-arabino-heptulosonate 7-phosphate (DAHP) to dehydroquinate (DHQ).</text>
</comment>
<comment type="catalytic activity">
    <reaction evidence="1">
        <text>7-phospho-2-dehydro-3-deoxy-D-arabino-heptonate = 3-dehydroquinate + phosphate</text>
        <dbReference type="Rhea" id="RHEA:21968"/>
        <dbReference type="ChEBI" id="CHEBI:32364"/>
        <dbReference type="ChEBI" id="CHEBI:43474"/>
        <dbReference type="ChEBI" id="CHEBI:58394"/>
        <dbReference type="EC" id="4.2.3.4"/>
    </reaction>
</comment>
<comment type="cofactor">
    <cofactor evidence="1">
        <name>NAD(+)</name>
        <dbReference type="ChEBI" id="CHEBI:57540"/>
    </cofactor>
</comment>
<comment type="cofactor">
    <cofactor evidence="1">
        <name>Co(2+)</name>
        <dbReference type="ChEBI" id="CHEBI:48828"/>
    </cofactor>
    <cofactor evidence="1">
        <name>Zn(2+)</name>
        <dbReference type="ChEBI" id="CHEBI:29105"/>
    </cofactor>
    <text evidence="1">Binds 1 divalent metal cation per subunit. Can use either Co(2+) or Zn(2+).</text>
</comment>
<comment type="pathway">
    <text evidence="1">Metabolic intermediate biosynthesis; chorismate biosynthesis; chorismate from D-erythrose 4-phosphate and phosphoenolpyruvate: step 2/7.</text>
</comment>
<comment type="subcellular location">
    <subcellularLocation>
        <location evidence="1">Cytoplasm</location>
    </subcellularLocation>
</comment>
<comment type="similarity">
    <text evidence="1">Belongs to the sugar phosphate cyclases superfamily. Dehydroquinate synthase family.</text>
</comment>
<name>AROB_STRAW</name>
<evidence type="ECO:0000255" key="1">
    <source>
        <dbReference type="HAMAP-Rule" id="MF_00110"/>
    </source>
</evidence>
<gene>
    <name evidence="1" type="primary">aroB</name>
    <name type="ordered locus">SAV_6856</name>
</gene>
<organism>
    <name type="scientific">Streptomyces avermitilis (strain ATCC 31267 / DSM 46492 / JCM 5070 / NBRC 14893 / NCIMB 12804 / NRRL 8165 / MA-4680)</name>
    <dbReference type="NCBI Taxonomy" id="227882"/>
    <lineage>
        <taxon>Bacteria</taxon>
        <taxon>Bacillati</taxon>
        <taxon>Actinomycetota</taxon>
        <taxon>Actinomycetes</taxon>
        <taxon>Kitasatosporales</taxon>
        <taxon>Streptomycetaceae</taxon>
        <taxon>Streptomyces</taxon>
    </lineage>
</organism>
<sequence>MSEAVTRIHVGGTAGTDPYEVLVGRQLLGELAGLIGDRVKRVAVVHPEALAETGEALRADLAEQGYEAVAIQVPNAEEAKTVEVAAYCWKALGQSGFTRTDVIVGVGGGATTDLAGFVAATWLRGVRWIAVPTTVLGMVDAAVGGKTGINTAEGKNLVGAFHPPAGVLCDLAALDSLPVNDYVSGLAEIIKAGFIADPAILELIEADPQAARTPAGPHTAELIERSIKVKAEVVSGDLKESGLREILNYGHTLAHAIEKNERYKWRHGAAVSVGMHFAAELGRLAGRLDDATADRHRTVLESVGLPLHYRYDQWPKLLETMKVDKKSRGDLLRFIVLDGLAKPTVLEGPDPAVLLAAYGEVGE</sequence>
<protein>
    <recommendedName>
        <fullName evidence="1">3-dehydroquinate synthase</fullName>
        <shortName evidence="1">DHQS</shortName>
        <ecNumber evidence="1">4.2.3.4</ecNumber>
    </recommendedName>
</protein>
<dbReference type="EC" id="4.2.3.4" evidence="1"/>
<dbReference type="EMBL" id="BA000030">
    <property type="protein sequence ID" value="BAC74567.1"/>
    <property type="molecule type" value="Genomic_DNA"/>
</dbReference>
<dbReference type="RefSeq" id="WP_010988254.1">
    <property type="nucleotide sequence ID" value="NZ_JZJK01000082.1"/>
</dbReference>
<dbReference type="SMR" id="Q827R8"/>
<dbReference type="GeneID" id="41543931"/>
<dbReference type="KEGG" id="sma:SAVERM_6856"/>
<dbReference type="eggNOG" id="COG0337">
    <property type="taxonomic scope" value="Bacteria"/>
</dbReference>
<dbReference type="HOGENOM" id="CLU_001201_0_3_11"/>
<dbReference type="OrthoDB" id="9806583at2"/>
<dbReference type="UniPathway" id="UPA00053">
    <property type="reaction ID" value="UER00085"/>
</dbReference>
<dbReference type="Proteomes" id="UP000000428">
    <property type="component" value="Chromosome"/>
</dbReference>
<dbReference type="GO" id="GO:0005737">
    <property type="term" value="C:cytoplasm"/>
    <property type="evidence" value="ECO:0007669"/>
    <property type="project" value="UniProtKB-SubCell"/>
</dbReference>
<dbReference type="GO" id="GO:0003856">
    <property type="term" value="F:3-dehydroquinate synthase activity"/>
    <property type="evidence" value="ECO:0007669"/>
    <property type="project" value="UniProtKB-UniRule"/>
</dbReference>
<dbReference type="GO" id="GO:0046872">
    <property type="term" value="F:metal ion binding"/>
    <property type="evidence" value="ECO:0007669"/>
    <property type="project" value="UniProtKB-KW"/>
</dbReference>
<dbReference type="GO" id="GO:0000166">
    <property type="term" value="F:nucleotide binding"/>
    <property type="evidence" value="ECO:0007669"/>
    <property type="project" value="UniProtKB-KW"/>
</dbReference>
<dbReference type="GO" id="GO:0008652">
    <property type="term" value="P:amino acid biosynthetic process"/>
    <property type="evidence" value="ECO:0007669"/>
    <property type="project" value="UniProtKB-KW"/>
</dbReference>
<dbReference type="GO" id="GO:0009073">
    <property type="term" value="P:aromatic amino acid family biosynthetic process"/>
    <property type="evidence" value="ECO:0007669"/>
    <property type="project" value="UniProtKB-KW"/>
</dbReference>
<dbReference type="GO" id="GO:0009423">
    <property type="term" value="P:chorismate biosynthetic process"/>
    <property type="evidence" value="ECO:0007669"/>
    <property type="project" value="UniProtKB-UniRule"/>
</dbReference>
<dbReference type="CDD" id="cd08195">
    <property type="entry name" value="DHQS"/>
    <property type="match status" value="1"/>
</dbReference>
<dbReference type="FunFam" id="1.20.1090.10:FF:000006">
    <property type="entry name" value="3-dehydroquinate synthase"/>
    <property type="match status" value="1"/>
</dbReference>
<dbReference type="FunFam" id="3.40.50.1970:FF:000012">
    <property type="entry name" value="3-dehydroquinate synthase"/>
    <property type="match status" value="1"/>
</dbReference>
<dbReference type="Gene3D" id="3.40.50.1970">
    <property type="match status" value="1"/>
</dbReference>
<dbReference type="Gene3D" id="1.20.1090.10">
    <property type="entry name" value="Dehydroquinate synthase-like - alpha domain"/>
    <property type="match status" value="1"/>
</dbReference>
<dbReference type="HAMAP" id="MF_00110">
    <property type="entry name" value="DHQ_synthase"/>
    <property type="match status" value="1"/>
</dbReference>
<dbReference type="InterPro" id="IPR050071">
    <property type="entry name" value="Dehydroquinate_synthase"/>
</dbReference>
<dbReference type="InterPro" id="IPR016037">
    <property type="entry name" value="DHQ_synth_AroB"/>
</dbReference>
<dbReference type="InterPro" id="IPR030963">
    <property type="entry name" value="DHQ_synth_fam"/>
</dbReference>
<dbReference type="InterPro" id="IPR030960">
    <property type="entry name" value="DHQS/DOIS_N"/>
</dbReference>
<dbReference type="InterPro" id="IPR056179">
    <property type="entry name" value="DHQS_C"/>
</dbReference>
<dbReference type="NCBIfam" id="TIGR01357">
    <property type="entry name" value="aroB"/>
    <property type="match status" value="1"/>
</dbReference>
<dbReference type="PANTHER" id="PTHR43622">
    <property type="entry name" value="3-DEHYDROQUINATE SYNTHASE"/>
    <property type="match status" value="1"/>
</dbReference>
<dbReference type="PANTHER" id="PTHR43622:SF7">
    <property type="entry name" value="3-DEHYDROQUINATE SYNTHASE, CHLOROPLASTIC"/>
    <property type="match status" value="1"/>
</dbReference>
<dbReference type="Pfam" id="PF01761">
    <property type="entry name" value="DHQ_synthase"/>
    <property type="match status" value="1"/>
</dbReference>
<dbReference type="Pfam" id="PF24621">
    <property type="entry name" value="DHQS_C"/>
    <property type="match status" value="1"/>
</dbReference>
<dbReference type="PIRSF" id="PIRSF001455">
    <property type="entry name" value="DHQ_synth"/>
    <property type="match status" value="1"/>
</dbReference>
<dbReference type="SUPFAM" id="SSF56796">
    <property type="entry name" value="Dehydroquinate synthase-like"/>
    <property type="match status" value="1"/>
</dbReference>